<protein>
    <recommendedName>
        <fullName evidence="1">Ketol-acid reductoisomerase (NADP(+))</fullName>
        <shortName evidence="1">KARI</shortName>
        <ecNumber evidence="1">1.1.1.86</ecNumber>
    </recommendedName>
    <alternativeName>
        <fullName evidence="1">Acetohydroxy-acid isomeroreductase</fullName>
        <shortName evidence="1">AHIR</shortName>
    </alternativeName>
    <alternativeName>
        <fullName evidence="1">Alpha-keto-beta-hydroxylacyl reductoisomerase</fullName>
    </alternativeName>
    <alternativeName>
        <fullName evidence="1">Ketol-acid reductoisomerase type 2</fullName>
    </alternativeName>
    <alternativeName>
        <fullName evidence="1">Ketol-acid reductoisomerase type II</fullName>
    </alternativeName>
</protein>
<comment type="function">
    <text evidence="1">Involved in the biosynthesis of branched-chain amino acids (BCAA). Catalyzes an alkyl-migration followed by a ketol-acid reduction of (S)-2-acetolactate (S2AL) to yield (R)-2,3-dihydroxy-isovalerate. In the isomerase reaction, S2AL is rearranged via a Mg-dependent methyl migration to produce 3-hydroxy-3-methyl-2-ketobutyrate (HMKB). In the reductase reaction, this 2-ketoacid undergoes a metal-dependent reduction by NADPH to yield (R)-2,3-dihydroxy-isovalerate.</text>
</comment>
<comment type="catalytic activity">
    <reaction evidence="1">
        <text>(2R)-2,3-dihydroxy-3-methylbutanoate + NADP(+) = (2S)-2-acetolactate + NADPH + H(+)</text>
        <dbReference type="Rhea" id="RHEA:22068"/>
        <dbReference type="ChEBI" id="CHEBI:15378"/>
        <dbReference type="ChEBI" id="CHEBI:49072"/>
        <dbReference type="ChEBI" id="CHEBI:57783"/>
        <dbReference type="ChEBI" id="CHEBI:58349"/>
        <dbReference type="ChEBI" id="CHEBI:58476"/>
        <dbReference type="EC" id="1.1.1.86"/>
    </reaction>
</comment>
<comment type="catalytic activity">
    <reaction evidence="1">
        <text>(2R,3R)-2,3-dihydroxy-3-methylpentanoate + NADP(+) = (S)-2-ethyl-2-hydroxy-3-oxobutanoate + NADPH + H(+)</text>
        <dbReference type="Rhea" id="RHEA:13493"/>
        <dbReference type="ChEBI" id="CHEBI:15378"/>
        <dbReference type="ChEBI" id="CHEBI:49256"/>
        <dbReference type="ChEBI" id="CHEBI:49258"/>
        <dbReference type="ChEBI" id="CHEBI:57783"/>
        <dbReference type="ChEBI" id="CHEBI:58349"/>
        <dbReference type="EC" id="1.1.1.86"/>
    </reaction>
</comment>
<comment type="cofactor">
    <cofactor evidence="1">
        <name>Mg(2+)</name>
        <dbReference type="ChEBI" id="CHEBI:18420"/>
    </cofactor>
    <text evidence="1">Binds 2 magnesium ions per subunit.</text>
</comment>
<comment type="pathway">
    <text evidence="1">Amino-acid biosynthesis; L-isoleucine biosynthesis; L-isoleucine from 2-oxobutanoate: step 2/4.</text>
</comment>
<comment type="pathway">
    <text evidence="1">Amino-acid biosynthesis; L-valine biosynthesis; L-valine from pyruvate: step 2/4.</text>
</comment>
<comment type="similarity">
    <text evidence="1">Belongs to the ketol-acid reductoisomerase family.</text>
</comment>
<evidence type="ECO:0000255" key="1">
    <source>
        <dbReference type="HAMAP-Rule" id="MF_00435"/>
    </source>
</evidence>
<evidence type="ECO:0000255" key="2">
    <source>
        <dbReference type="PROSITE-ProRule" id="PRU01197"/>
    </source>
</evidence>
<evidence type="ECO:0000255" key="3">
    <source>
        <dbReference type="PROSITE-ProRule" id="PRU01198"/>
    </source>
</evidence>
<name>ILVC_SHIB3</name>
<dbReference type="EC" id="1.1.1.86" evidence="1"/>
<dbReference type="EMBL" id="CP001063">
    <property type="protein sequence ID" value="ACD06613.1"/>
    <property type="molecule type" value="Genomic_DNA"/>
</dbReference>
<dbReference type="RefSeq" id="WP_001295253.1">
    <property type="nucleotide sequence ID" value="NC_010658.1"/>
</dbReference>
<dbReference type="SMR" id="B2TU17"/>
<dbReference type="STRING" id="344609.SbBS512_E4146"/>
<dbReference type="GeneID" id="93778171"/>
<dbReference type="KEGG" id="sbc:SbBS512_E4146"/>
<dbReference type="HOGENOM" id="CLU_551905_0_0_6"/>
<dbReference type="UniPathway" id="UPA00047">
    <property type="reaction ID" value="UER00056"/>
</dbReference>
<dbReference type="UniPathway" id="UPA00049">
    <property type="reaction ID" value="UER00060"/>
</dbReference>
<dbReference type="Proteomes" id="UP000001030">
    <property type="component" value="Chromosome"/>
</dbReference>
<dbReference type="GO" id="GO:0005829">
    <property type="term" value="C:cytosol"/>
    <property type="evidence" value="ECO:0007669"/>
    <property type="project" value="TreeGrafter"/>
</dbReference>
<dbReference type="GO" id="GO:0004455">
    <property type="term" value="F:ketol-acid reductoisomerase activity"/>
    <property type="evidence" value="ECO:0007669"/>
    <property type="project" value="UniProtKB-UniRule"/>
</dbReference>
<dbReference type="GO" id="GO:0000287">
    <property type="term" value="F:magnesium ion binding"/>
    <property type="evidence" value="ECO:0007669"/>
    <property type="project" value="UniProtKB-UniRule"/>
</dbReference>
<dbReference type="GO" id="GO:0009097">
    <property type="term" value="P:isoleucine biosynthetic process"/>
    <property type="evidence" value="ECO:0007669"/>
    <property type="project" value="UniProtKB-UniRule"/>
</dbReference>
<dbReference type="GO" id="GO:0009099">
    <property type="term" value="P:L-valine biosynthetic process"/>
    <property type="evidence" value="ECO:0007669"/>
    <property type="project" value="UniProtKB-UniRule"/>
</dbReference>
<dbReference type="FunFam" id="1.10.1040.10:FF:000007">
    <property type="entry name" value="Ketol-acid reductoisomerase (NADP(+))"/>
    <property type="match status" value="1"/>
</dbReference>
<dbReference type="FunFam" id="3.40.50.720:FF:000043">
    <property type="entry name" value="Ketol-acid reductoisomerase (NADP(+))"/>
    <property type="match status" value="1"/>
</dbReference>
<dbReference type="Gene3D" id="1.10.1040.10">
    <property type="entry name" value="N-(1-d-carboxylethyl)-l-norvaline Dehydrogenase, domain 2"/>
    <property type="match status" value="1"/>
</dbReference>
<dbReference type="Gene3D" id="3.40.50.720">
    <property type="entry name" value="NAD(P)-binding Rossmann-like Domain"/>
    <property type="match status" value="1"/>
</dbReference>
<dbReference type="HAMAP" id="MF_00435">
    <property type="entry name" value="IlvC"/>
    <property type="match status" value="1"/>
</dbReference>
<dbReference type="InterPro" id="IPR008927">
    <property type="entry name" value="6-PGluconate_DH-like_C_sf"/>
</dbReference>
<dbReference type="InterPro" id="IPR013328">
    <property type="entry name" value="6PGD_dom2"/>
</dbReference>
<dbReference type="InterPro" id="IPR013023">
    <property type="entry name" value="KARI"/>
</dbReference>
<dbReference type="InterPro" id="IPR000506">
    <property type="entry name" value="KARI_C"/>
</dbReference>
<dbReference type="InterPro" id="IPR013116">
    <property type="entry name" value="KARI_N"/>
</dbReference>
<dbReference type="InterPro" id="IPR036291">
    <property type="entry name" value="NAD(P)-bd_dom_sf"/>
</dbReference>
<dbReference type="NCBIfam" id="TIGR00465">
    <property type="entry name" value="ilvC"/>
    <property type="match status" value="1"/>
</dbReference>
<dbReference type="NCBIfam" id="NF003557">
    <property type="entry name" value="PRK05225.1"/>
    <property type="match status" value="1"/>
</dbReference>
<dbReference type="PANTHER" id="PTHR21371">
    <property type="entry name" value="KETOL-ACID REDUCTOISOMERASE, MITOCHONDRIAL"/>
    <property type="match status" value="1"/>
</dbReference>
<dbReference type="PANTHER" id="PTHR21371:SF1">
    <property type="entry name" value="KETOL-ACID REDUCTOISOMERASE, MITOCHONDRIAL"/>
    <property type="match status" value="1"/>
</dbReference>
<dbReference type="Pfam" id="PF01450">
    <property type="entry name" value="KARI_C"/>
    <property type="match status" value="2"/>
</dbReference>
<dbReference type="Pfam" id="PF07991">
    <property type="entry name" value="KARI_N"/>
    <property type="match status" value="1"/>
</dbReference>
<dbReference type="SUPFAM" id="SSF48179">
    <property type="entry name" value="6-phosphogluconate dehydrogenase C-terminal domain-like"/>
    <property type="match status" value="2"/>
</dbReference>
<dbReference type="SUPFAM" id="SSF51735">
    <property type="entry name" value="NAD(P)-binding Rossmann-fold domains"/>
    <property type="match status" value="1"/>
</dbReference>
<dbReference type="PROSITE" id="PS51851">
    <property type="entry name" value="KARI_C"/>
    <property type="match status" value="2"/>
</dbReference>
<dbReference type="PROSITE" id="PS51850">
    <property type="entry name" value="KARI_N"/>
    <property type="match status" value="1"/>
</dbReference>
<reference key="1">
    <citation type="submission" date="2008-05" db="EMBL/GenBank/DDBJ databases">
        <title>Complete sequence of Shigella boydii serotype 18 strain BS512.</title>
        <authorList>
            <person name="Rasko D.A."/>
            <person name="Rosovitz M."/>
            <person name="Maurelli A.T."/>
            <person name="Myers G."/>
            <person name="Seshadri R."/>
            <person name="Cer R."/>
            <person name="Jiang L."/>
            <person name="Ravel J."/>
            <person name="Sebastian Y."/>
        </authorList>
    </citation>
    <scope>NUCLEOTIDE SEQUENCE [LARGE SCALE GENOMIC DNA]</scope>
    <source>
        <strain>CDC 3083-94 / BS512</strain>
    </source>
</reference>
<accession>B2TU17</accession>
<feature type="chain" id="PRO_1000190994" description="Ketol-acid reductoisomerase (NADP(+))">
    <location>
        <begin position="1"/>
        <end position="491"/>
    </location>
</feature>
<feature type="domain" description="KARI N-terminal Rossmann" evidence="2">
    <location>
        <begin position="15"/>
        <end position="208"/>
    </location>
</feature>
<feature type="domain" description="KARI C-terminal knotted 1" evidence="3">
    <location>
        <begin position="209"/>
        <end position="344"/>
    </location>
</feature>
<feature type="domain" description="KARI C-terminal knotted 2" evidence="3">
    <location>
        <begin position="345"/>
        <end position="484"/>
    </location>
</feature>
<feature type="active site" evidence="1">
    <location>
        <position position="132"/>
    </location>
</feature>
<feature type="binding site" evidence="1">
    <location>
        <begin position="45"/>
        <end position="48"/>
    </location>
    <ligand>
        <name>NADP(+)</name>
        <dbReference type="ChEBI" id="CHEBI:58349"/>
    </ligand>
</feature>
<feature type="binding site" evidence="1">
    <location>
        <position position="68"/>
    </location>
    <ligand>
        <name>NADP(+)</name>
        <dbReference type="ChEBI" id="CHEBI:58349"/>
    </ligand>
</feature>
<feature type="binding site" evidence="1">
    <location>
        <position position="76"/>
    </location>
    <ligand>
        <name>NADP(+)</name>
        <dbReference type="ChEBI" id="CHEBI:58349"/>
    </ligand>
</feature>
<feature type="binding site" evidence="1">
    <location>
        <position position="78"/>
    </location>
    <ligand>
        <name>NADP(+)</name>
        <dbReference type="ChEBI" id="CHEBI:58349"/>
    </ligand>
</feature>
<feature type="binding site" evidence="1">
    <location>
        <begin position="108"/>
        <end position="110"/>
    </location>
    <ligand>
        <name>NADP(+)</name>
        <dbReference type="ChEBI" id="CHEBI:58349"/>
    </ligand>
</feature>
<feature type="binding site" evidence="1">
    <location>
        <position position="158"/>
    </location>
    <ligand>
        <name>NADP(+)</name>
        <dbReference type="ChEBI" id="CHEBI:58349"/>
    </ligand>
</feature>
<feature type="binding site" evidence="1">
    <location>
        <position position="217"/>
    </location>
    <ligand>
        <name>Mg(2+)</name>
        <dbReference type="ChEBI" id="CHEBI:18420"/>
        <label>1</label>
    </ligand>
</feature>
<feature type="binding site" evidence="1">
    <location>
        <position position="217"/>
    </location>
    <ligand>
        <name>Mg(2+)</name>
        <dbReference type="ChEBI" id="CHEBI:18420"/>
        <label>2</label>
    </ligand>
</feature>
<feature type="binding site" evidence="1">
    <location>
        <position position="221"/>
    </location>
    <ligand>
        <name>Mg(2+)</name>
        <dbReference type="ChEBI" id="CHEBI:18420"/>
        <label>1</label>
    </ligand>
</feature>
<feature type="binding site" evidence="1">
    <location>
        <position position="389"/>
    </location>
    <ligand>
        <name>Mg(2+)</name>
        <dbReference type="ChEBI" id="CHEBI:18420"/>
        <label>2</label>
    </ligand>
</feature>
<feature type="binding site" evidence="1">
    <location>
        <position position="393"/>
    </location>
    <ligand>
        <name>Mg(2+)</name>
        <dbReference type="ChEBI" id="CHEBI:18420"/>
        <label>2</label>
    </ligand>
</feature>
<feature type="binding site" evidence="1">
    <location>
        <position position="414"/>
    </location>
    <ligand>
        <name>substrate</name>
    </ligand>
</feature>
<organism>
    <name type="scientific">Shigella boydii serotype 18 (strain CDC 3083-94 / BS512)</name>
    <dbReference type="NCBI Taxonomy" id="344609"/>
    <lineage>
        <taxon>Bacteria</taxon>
        <taxon>Pseudomonadati</taxon>
        <taxon>Pseudomonadota</taxon>
        <taxon>Gammaproteobacteria</taxon>
        <taxon>Enterobacterales</taxon>
        <taxon>Enterobacteriaceae</taxon>
        <taxon>Shigella</taxon>
    </lineage>
</organism>
<proteinExistence type="inferred from homology"/>
<gene>
    <name evidence="1" type="primary">ilvC</name>
    <name type="ordered locus">SbBS512_E4146</name>
</gene>
<keyword id="KW-0028">Amino-acid biosynthesis</keyword>
<keyword id="KW-0100">Branched-chain amino acid biosynthesis</keyword>
<keyword id="KW-0460">Magnesium</keyword>
<keyword id="KW-0479">Metal-binding</keyword>
<keyword id="KW-0521">NADP</keyword>
<keyword id="KW-0560">Oxidoreductase</keyword>
<keyword id="KW-1185">Reference proteome</keyword>
<keyword id="KW-0677">Repeat</keyword>
<sequence length="491" mass="54085">MANYFNTLNLRQQLAQLGKCRFMGRDEFADGASYLQGKKVVIVGCGAQGLNQGLNMRDSGLDISYALRKEAIAEKRASWRKATENGFKVGTYEELIPQADLVVNLTPDKQHSDVVRTVQPLMKDGAALGYSHGFNIVEVGEQIRKDITVVMVAPKCPGTEVREEYKRGFGVPTLIAVHPENDPKGEGMAIAKAWAAATGGHRAGVLESSFVAEVKSDLMGEQTILCGMLQAGSLLCFDKLVEEGTDPAYAEKLIQFGWETITEALKQGGITLMMDRLSNPAKLRAYALSEQLKEIMAPLFQKHMDDIISGEFSSGMMADWANDDKKLLTWREETGKTAFETAPQYEGKIGEQEYFDKGVLMIAMVKAGVELAFETMVDSGIIEESAYYESLHELPLIANTIARKRLYEMNVVISDTAEYGNYLFSYACVPLLKPFMAELQPGDLGKAIPEGAVDNAQLRDVNEAIRCHAIEQVGKKLRGYMTDMKRIAVAG</sequence>